<gene>
    <name type="ordered locus">plu0085</name>
</gene>
<keyword id="KW-0119">Carbohydrate metabolism</keyword>
<keyword id="KW-0868">Chloride</keyword>
<keyword id="KW-0378">Hydrolase</keyword>
<keyword id="KW-0460">Magnesium</keyword>
<keyword id="KW-0479">Metal-binding</keyword>
<keyword id="KW-1185">Reference proteome</keyword>
<comment type="function">
    <text evidence="1">Specifically catalyzes the dephosphorylation of 2-phosphoglycolate. Is involved in the dissimilation of the intracellular 2-phosphoglycolate formed during the DNA repair of 3'-phosphoglycolate ends, a major class of DNA lesions induced by oxidative stress.</text>
</comment>
<comment type="catalytic activity">
    <reaction evidence="1">
        <text>2-phosphoglycolate + H2O = glycolate + phosphate</text>
        <dbReference type="Rhea" id="RHEA:14369"/>
        <dbReference type="ChEBI" id="CHEBI:15377"/>
        <dbReference type="ChEBI" id="CHEBI:29805"/>
        <dbReference type="ChEBI" id="CHEBI:43474"/>
        <dbReference type="ChEBI" id="CHEBI:58033"/>
        <dbReference type="EC" id="3.1.3.18"/>
    </reaction>
</comment>
<comment type="cofactor">
    <cofactor evidence="1">
        <name>Mg(2+)</name>
        <dbReference type="ChEBI" id="CHEBI:18420"/>
    </cofactor>
</comment>
<comment type="cofactor">
    <cofactor evidence="1">
        <name>chloride</name>
        <dbReference type="ChEBI" id="CHEBI:17996"/>
    </cofactor>
</comment>
<comment type="pathway">
    <text evidence="1">Organic acid metabolism; glycolate biosynthesis; glycolate from 2-phosphoglycolate: step 1/1.</text>
</comment>
<comment type="subunit">
    <text evidence="1">Monomer.</text>
</comment>
<comment type="similarity">
    <text evidence="1">Belongs to the HAD-like hydrolase superfamily. CbbY/CbbZ/Gph/YieH family.</text>
</comment>
<sequence>MASKVLKGIRAIAFDLDGTLVDSAGGLADALDQALLAKGLPAAGKERVAAWVGNGADIMVERALTWARTKLTAQLHKETRELFDRFYETTVTTGSQLFPEVKVTLAELAKHNLPMGIITNKPTPFIAPLLASLDISEYFSLVLGGDDVKEKKPHPAPIYLTMGTFGLRKEELLFVGDSRNDILAAQAAGCPCVGLTYGYNYGESIALSNPDCILTNFSDLLSTIGLPSLKLQEA</sequence>
<name>GPH_PHOLL</name>
<protein>
    <recommendedName>
        <fullName evidence="1">Phosphoglycolate phosphatase</fullName>
        <shortName evidence="1">PGP</shortName>
        <shortName evidence="1">PGPase</shortName>
        <ecNumber evidence="1">3.1.3.18</ecNumber>
    </recommendedName>
</protein>
<organism>
    <name type="scientific">Photorhabdus laumondii subsp. laumondii (strain DSM 15139 / CIP 105565 / TT01)</name>
    <name type="common">Photorhabdus luminescens subsp. laumondii</name>
    <dbReference type="NCBI Taxonomy" id="243265"/>
    <lineage>
        <taxon>Bacteria</taxon>
        <taxon>Pseudomonadati</taxon>
        <taxon>Pseudomonadota</taxon>
        <taxon>Gammaproteobacteria</taxon>
        <taxon>Enterobacterales</taxon>
        <taxon>Morganellaceae</taxon>
        <taxon>Photorhabdus</taxon>
    </lineage>
</organism>
<evidence type="ECO:0000255" key="1">
    <source>
        <dbReference type="HAMAP-Rule" id="MF_00495"/>
    </source>
</evidence>
<dbReference type="EC" id="3.1.3.18" evidence="1"/>
<dbReference type="EMBL" id="BX571859">
    <property type="protein sequence ID" value="CAE12380.1"/>
    <property type="molecule type" value="Genomic_DNA"/>
</dbReference>
<dbReference type="RefSeq" id="WP_011144491.1">
    <property type="nucleotide sequence ID" value="NC_005126.1"/>
</dbReference>
<dbReference type="SMR" id="Q7NA60"/>
<dbReference type="STRING" id="243265.plu0085"/>
<dbReference type="GeneID" id="48846386"/>
<dbReference type="KEGG" id="plu:plu0085"/>
<dbReference type="eggNOG" id="COG0546">
    <property type="taxonomic scope" value="Bacteria"/>
</dbReference>
<dbReference type="HOGENOM" id="CLU_045011_19_1_6"/>
<dbReference type="OrthoDB" id="9776368at2"/>
<dbReference type="UniPathway" id="UPA00865">
    <property type="reaction ID" value="UER00834"/>
</dbReference>
<dbReference type="Proteomes" id="UP000002514">
    <property type="component" value="Chromosome"/>
</dbReference>
<dbReference type="GO" id="GO:0005829">
    <property type="term" value="C:cytosol"/>
    <property type="evidence" value="ECO:0007669"/>
    <property type="project" value="TreeGrafter"/>
</dbReference>
<dbReference type="GO" id="GO:0046872">
    <property type="term" value="F:metal ion binding"/>
    <property type="evidence" value="ECO:0007669"/>
    <property type="project" value="UniProtKB-KW"/>
</dbReference>
<dbReference type="GO" id="GO:0008967">
    <property type="term" value="F:phosphoglycolate phosphatase activity"/>
    <property type="evidence" value="ECO:0007669"/>
    <property type="project" value="UniProtKB-UniRule"/>
</dbReference>
<dbReference type="GO" id="GO:0005975">
    <property type="term" value="P:carbohydrate metabolic process"/>
    <property type="evidence" value="ECO:0007669"/>
    <property type="project" value="InterPro"/>
</dbReference>
<dbReference type="GO" id="GO:0006281">
    <property type="term" value="P:DNA repair"/>
    <property type="evidence" value="ECO:0007669"/>
    <property type="project" value="TreeGrafter"/>
</dbReference>
<dbReference type="GO" id="GO:0046295">
    <property type="term" value="P:glycolate biosynthetic process"/>
    <property type="evidence" value="ECO:0007669"/>
    <property type="project" value="UniProtKB-UniRule"/>
</dbReference>
<dbReference type="CDD" id="cd16417">
    <property type="entry name" value="HAD_PGPase"/>
    <property type="match status" value="1"/>
</dbReference>
<dbReference type="FunFam" id="3.40.50.1000:FF:000022">
    <property type="entry name" value="Phosphoglycolate phosphatase"/>
    <property type="match status" value="1"/>
</dbReference>
<dbReference type="Gene3D" id="3.40.50.1000">
    <property type="entry name" value="HAD superfamily/HAD-like"/>
    <property type="match status" value="1"/>
</dbReference>
<dbReference type="Gene3D" id="1.10.150.240">
    <property type="entry name" value="Putative phosphatase, domain 2"/>
    <property type="match status" value="1"/>
</dbReference>
<dbReference type="HAMAP" id="MF_00495">
    <property type="entry name" value="GPH_hydrolase_bact"/>
    <property type="match status" value="1"/>
</dbReference>
<dbReference type="InterPro" id="IPR050155">
    <property type="entry name" value="HAD-like_hydrolase_sf"/>
</dbReference>
<dbReference type="InterPro" id="IPR036412">
    <property type="entry name" value="HAD-like_sf"/>
</dbReference>
<dbReference type="InterPro" id="IPR006439">
    <property type="entry name" value="HAD-SF_hydro_IA"/>
</dbReference>
<dbReference type="InterPro" id="IPR041492">
    <property type="entry name" value="HAD_2"/>
</dbReference>
<dbReference type="InterPro" id="IPR023214">
    <property type="entry name" value="HAD_sf"/>
</dbReference>
<dbReference type="InterPro" id="IPR023198">
    <property type="entry name" value="PGP-like_dom2"/>
</dbReference>
<dbReference type="InterPro" id="IPR037512">
    <property type="entry name" value="PGPase_prok"/>
</dbReference>
<dbReference type="NCBIfam" id="TIGR01549">
    <property type="entry name" value="HAD-SF-IA-v1"/>
    <property type="match status" value="1"/>
</dbReference>
<dbReference type="NCBIfam" id="TIGR01509">
    <property type="entry name" value="HAD-SF-IA-v3"/>
    <property type="match status" value="1"/>
</dbReference>
<dbReference type="NCBIfam" id="TIGR01449">
    <property type="entry name" value="PGP_bact"/>
    <property type="match status" value="1"/>
</dbReference>
<dbReference type="NCBIfam" id="NF009695">
    <property type="entry name" value="PRK13222.1-2"/>
    <property type="match status" value="1"/>
</dbReference>
<dbReference type="NCBIfam" id="NF009697">
    <property type="entry name" value="PRK13222.1-4"/>
    <property type="match status" value="1"/>
</dbReference>
<dbReference type="PANTHER" id="PTHR43434">
    <property type="entry name" value="PHOSPHOGLYCOLATE PHOSPHATASE"/>
    <property type="match status" value="1"/>
</dbReference>
<dbReference type="PANTHER" id="PTHR43434:SF1">
    <property type="entry name" value="PHOSPHOGLYCOLATE PHOSPHATASE"/>
    <property type="match status" value="1"/>
</dbReference>
<dbReference type="Pfam" id="PF13419">
    <property type="entry name" value="HAD_2"/>
    <property type="match status" value="1"/>
</dbReference>
<dbReference type="PRINTS" id="PR00413">
    <property type="entry name" value="HADHALOGNASE"/>
</dbReference>
<dbReference type="SFLD" id="SFLDG01135">
    <property type="entry name" value="C1.5.6:_HAD__Beta-PGM__Phospha"/>
    <property type="match status" value="1"/>
</dbReference>
<dbReference type="SFLD" id="SFLDG01129">
    <property type="entry name" value="C1.5:_HAD__Beta-PGM__Phosphata"/>
    <property type="match status" value="1"/>
</dbReference>
<dbReference type="SUPFAM" id="SSF56784">
    <property type="entry name" value="HAD-like"/>
    <property type="match status" value="1"/>
</dbReference>
<reference key="1">
    <citation type="journal article" date="2003" name="Nat. Biotechnol.">
        <title>The genome sequence of the entomopathogenic bacterium Photorhabdus luminescens.</title>
        <authorList>
            <person name="Duchaud E."/>
            <person name="Rusniok C."/>
            <person name="Frangeul L."/>
            <person name="Buchrieser C."/>
            <person name="Givaudan A."/>
            <person name="Taourit S."/>
            <person name="Bocs S."/>
            <person name="Boursaux-Eude C."/>
            <person name="Chandler M."/>
            <person name="Charles J.-F."/>
            <person name="Dassa E."/>
            <person name="Derose R."/>
            <person name="Derzelle S."/>
            <person name="Freyssinet G."/>
            <person name="Gaudriault S."/>
            <person name="Medigue C."/>
            <person name="Lanois A."/>
            <person name="Powell K."/>
            <person name="Siguier P."/>
            <person name="Vincent R."/>
            <person name="Wingate V."/>
            <person name="Zouine M."/>
            <person name="Glaser P."/>
            <person name="Boemare N."/>
            <person name="Danchin A."/>
            <person name="Kunst F."/>
        </authorList>
    </citation>
    <scope>NUCLEOTIDE SEQUENCE [LARGE SCALE GENOMIC DNA]</scope>
    <source>
        <strain>DSM 15139 / CIP 105565 / TT01</strain>
    </source>
</reference>
<feature type="chain" id="PRO_0000238165" description="Phosphoglycolate phosphatase">
    <location>
        <begin position="1"/>
        <end position="234"/>
    </location>
</feature>
<feature type="active site" description="Nucleophile" evidence="1">
    <location>
        <position position="15"/>
    </location>
</feature>
<feature type="binding site" evidence="1">
    <location>
        <position position="15"/>
    </location>
    <ligand>
        <name>Mg(2+)</name>
        <dbReference type="ChEBI" id="CHEBI:18420"/>
    </ligand>
</feature>
<feature type="binding site" evidence="1">
    <location>
        <position position="17"/>
    </location>
    <ligand>
        <name>Mg(2+)</name>
        <dbReference type="ChEBI" id="CHEBI:18420"/>
    </ligand>
</feature>
<feature type="binding site" evidence="1">
    <location>
        <position position="177"/>
    </location>
    <ligand>
        <name>Mg(2+)</name>
        <dbReference type="ChEBI" id="CHEBI:18420"/>
    </ligand>
</feature>
<proteinExistence type="inferred from homology"/>
<accession>Q7NA60</accession>